<reference key="1">
    <citation type="journal article" date="1994" name="J. Bacteriol.">
        <title>Identification and structure of the nasR gene encoding a nitrate- and nitrite-responsive positive regulator of nasFEDCBA (nitrate assimilation) operon expression in Klebsiella pneumoniae M5al.</title>
        <authorList>
            <person name="Goldman B.S."/>
            <person name="Lin J.T."/>
            <person name="Stewart V."/>
        </authorList>
    </citation>
    <scope>NUCLEOTIDE SEQUENCE [GENOMIC DNA]</scope>
    <source>
        <strain>M5a1</strain>
    </source>
</reference>
<reference key="2">
    <citation type="journal article" date="1998" name="J. Mol. Biol.">
        <title>NasR, a novel RNA-binding protein, mediates nitrate-responsive transcription antitermination of the Klebsiella oxytoca M5al nasF operon leader in vitro.</title>
        <authorList>
            <person name="Chai W."/>
            <person name="Stewart V."/>
        </authorList>
    </citation>
    <scope>FUNCTION</scope>
    <source>
        <strain>M5a1</strain>
    </source>
</reference>
<sequence length="396" mass="44507">MNNMAGNTPEVVDWFARARRLQKQQLHQLAQQGTLAGQISALVHMLQCERGASNIWLCSGGRLYAAECRAGAALVDEQLTRFYAALEPARDAASSALCWRIACAVWYLPQLAALRKRVRDREIAAEEATGQFSRIIRHLLNIVPQLNDSIDDPQIAGRMVALYSFMQGKELAGQERALGALGFARGQFSDELRQQLVDRIDGQQPCFDSFQALAQPPQTALFAEQCQASLEIEQLRRVACTRQPPADEGETALRWFCAQTQRLEQLRGVEELLIVDLLNAADALLEGEEPEAQLPPADWQEDSIALRLDKQLLPLVRQQAHELQQLSGQLASLKDALEERKLIEKAKSVLMTYQGMQEEQAWQALRKMAMDKNQRMVEIARALLTVKALWRVTPKE</sequence>
<accession>Q48468</accession>
<gene>
    <name type="primary">nasR</name>
</gene>
<comment type="function">
    <text evidence="3">Nitrate- and nitrite-responsive positive regulator for nasFEDCBA operon expression. NasR protein binds to the factor-independent terminator site located in the nasF operon leader RNA to effect transcription antitermination.</text>
</comment>
<feature type="chain" id="PRO_0000096738" description="Nitrate regulatory protein">
    <location>
        <begin position="1"/>
        <end position="396"/>
    </location>
</feature>
<feature type="domain" description="NIT" evidence="1">
    <location>
        <begin position="37"/>
        <end position="284"/>
    </location>
</feature>
<feature type="domain" description="ANTAR" evidence="2">
    <location>
        <begin position="323"/>
        <end position="384"/>
    </location>
</feature>
<feature type="helix" evidence="4">
    <location>
        <begin position="10"/>
        <end position="25"/>
    </location>
</feature>
<feature type="helix" evidence="4">
    <location>
        <begin position="26"/>
        <end position="28"/>
    </location>
</feature>
<feature type="helix" evidence="4">
    <location>
        <begin position="29"/>
        <end position="58"/>
    </location>
</feature>
<feature type="strand" evidence="4">
    <location>
        <begin position="61"/>
        <end position="63"/>
    </location>
</feature>
<feature type="helix" evidence="4">
    <location>
        <begin position="65"/>
        <end position="90"/>
    </location>
</feature>
<feature type="helix" evidence="4">
    <location>
        <begin position="95"/>
        <end position="107"/>
    </location>
</feature>
<feature type="helix" evidence="4">
    <location>
        <begin position="108"/>
        <end position="110"/>
    </location>
</feature>
<feature type="helix" evidence="4">
    <location>
        <begin position="111"/>
        <end position="120"/>
    </location>
</feature>
<feature type="helix" evidence="4">
    <location>
        <begin position="125"/>
        <end position="140"/>
    </location>
</feature>
<feature type="helix" evidence="4">
    <location>
        <begin position="142"/>
        <end position="146"/>
    </location>
</feature>
<feature type="helix" evidence="4">
    <location>
        <begin position="147"/>
        <end position="149"/>
    </location>
</feature>
<feature type="helix" evidence="4">
    <location>
        <begin position="153"/>
        <end position="185"/>
    </location>
</feature>
<feature type="helix" evidence="4">
    <location>
        <begin position="190"/>
        <end position="213"/>
    </location>
</feature>
<feature type="helix" evidence="4">
    <location>
        <begin position="216"/>
        <end position="225"/>
    </location>
</feature>
<feature type="helix" evidence="4">
    <location>
        <begin position="230"/>
        <end position="240"/>
    </location>
</feature>
<feature type="helix" evidence="4">
    <location>
        <begin position="250"/>
        <end position="285"/>
    </location>
</feature>
<feature type="helix" evidence="4">
    <location>
        <begin position="304"/>
        <end position="312"/>
    </location>
</feature>
<feature type="helix" evidence="4">
    <location>
        <begin position="314"/>
        <end position="331"/>
    </location>
</feature>
<feature type="helix" evidence="4">
    <location>
        <begin position="333"/>
        <end position="353"/>
    </location>
</feature>
<feature type="helix" evidence="4">
    <location>
        <begin position="358"/>
        <end position="372"/>
    </location>
</feature>
<feature type="helix" evidence="4">
    <location>
        <begin position="376"/>
        <end position="385"/>
    </location>
</feature>
<feature type="helix" evidence="4">
    <location>
        <begin position="387"/>
        <end position="389"/>
    </location>
</feature>
<proteinExistence type="evidence at protein level"/>
<evidence type="ECO:0000255" key="1">
    <source>
        <dbReference type="PROSITE-ProRule" id="PRU00232"/>
    </source>
</evidence>
<evidence type="ECO:0000255" key="2">
    <source>
        <dbReference type="PROSITE-ProRule" id="PRU00308"/>
    </source>
</evidence>
<evidence type="ECO:0000269" key="3">
    <source>
    </source>
</evidence>
<evidence type="ECO:0007829" key="4">
    <source>
        <dbReference type="PDB" id="4AKK"/>
    </source>
</evidence>
<dbReference type="EMBL" id="L27824">
    <property type="protein sequence ID" value="AAA25101.2"/>
    <property type="molecule type" value="Genomic_DNA"/>
</dbReference>
<dbReference type="PIR" id="A55859">
    <property type="entry name" value="A55859"/>
</dbReference>
<dbReference type="PDB" id="4AKK">
    <property type="method" value="X-ray"/>
    <property type="resolution" value="2.14 A"/>
    <property type="chains" value="A/B=1-396"/>
</dbReference>
<dbReference type="PDBsum" id="4AKK"/>
<dbReference type="SMR" id="Q48468"/>
<dbReference type="STRING" id="571.AB185_18715"/>
<dbReference type="PATRIC" id="fig|571.110.peg.3487"/>
<dbReference type="eggNOG" id="COG3707">
    <property type="taxonomic scope" value="Bacteria"/>
</dbReference>
<dbReference type="EvolutionaryTrace" id="Q48468"/>
<dbReference type="GO" id="GO:0003723">
    <property type="term" value="F:RNA binding"/>
    <property type="evidence" value="ECO:0007669"/>
    <property type="project" value="UniProtKB-KW"/>
</dbReference>
<dbReference type="GO" id="GO:0031564">
    <property type="term" value="P:transcription antitermination"/>
    <property type="evidence" value="ECO:0007669"/>
    <property type="project" value="UniProtKB-KW"/>
</dbReference>
<dbReference type="Gene3D" id="1.10.10.10">
    <property type="entry name" value="Winged helix-like DNA-binding domain superfamily/Winged helix DNA-binding domain"/>
    <property type="match status" value="1"/>
</dbReference>
<dbReference type="InterPro" id="IPR005561">
    <property type="entry name" value="ANTAR"/>
</dbReference>
<dbReference type="InterPro" id="IPR011006">
    <property type="entry name" value="CheY-like_superfamily"/>
</dbReference>
<dbReference type="InterPro" id="IPR013587">
    <property type="entry name" value="Nitrate/nitrite_sensing"/>
</dbReference>
<dbReference type="InterPro" id="IPR010910">
    <property type="entry name" value="Nitrate/nitrite_sensing_bac"/>
</dbReference>
<dbReference type="InterPro" id="IPR036388">
    <property type="entry name" value="WH-like_DNA-bd_sf"/>
</dbReference>
<dbReference type="Pfam" id="PF03861">
    <property type="entry name" value="ANTAR"/>
    <property type="match status" value="1"/>
</dbReference>
<dbReference type="Pfam" id="PF08376">
    <property type="entry name" value="NIT"/>
    <property type="match status" value="1"/>
</dbReference>
<dbReference type="SMART" id="SM01012">
    <property type="entry name" value="ANTAR"/>
    <property type="match status" value="1"/>
</dbReference>
<dbReference type="SUPFAM" id="SSF52172">
    <property type="entry name" value="CheY-like"/>
    <property type="match status" value="1"/>
</dbReference>
<dbReference type="PROSITE" id="PS50921">
    <property type="entry name" value="ANTAR"/>
    <property type="match status" value="1"/>
</dbReference>
<dbReference type="PROSITE" id="PS50906">
    <property type="entry name" value="NIT"/>
    <property type="match status" value="1"/>
</dbReference>
<keyword id="KW-0002">3D-structure</keyword>
<keyword id="KW-0694">RNA-binding</keyword>
<keyword id="KW-0804">Transcription</keyword>
<keyword id="KW-0889">Transcription antitermination</keyword>
<keyword id="KW-0805">Transcription regulation</keyword>
<name>NASR_KLEOX</name>
<organism>
    <name type="scientific">Klebsiella oxytoca</name>
    <dbReference type="NCBI Taxonomy" id="571"/>
    <lineage>
        <taxon>Bacteria</taxon>
        <taxon>Pseudomonadati</taxon>
        <taxon>Pseudomonadota</taxon>
        <taxon>Gammaproteobacteria</taxon>
        <taxon>Enterobacterales</taxon>
        <taxon>Enterobacteriaceae</taxon>
        <taxon>Klebsiella/Raoultella group</taxon>
        <taxon>Klebsiella</taxon>
    </lineage>
</organism>
<protein>
    <recommendedName>
        <fullName>Nitrate regulatory protein</fullName>
    </recommendedName>
</protein>